<proteinExistence type="inferred from homology"/>
<organism>
    <name type="scientific">Micromonospora griseorubida</name>
    <dbReference type="NCBI Taxonomy" id="28040"/>
    <lineage>
        <taxon>Bacteria</taxon>
        <taxon>Bacillati</taxon>
        <taxon>Actinomycetota</taxon>
        <taxon>Actinomycetes</taxon>
        <taxon>Micromonosporales</taxon>
        <taxon>Micromonosporaceae</taxon>
        <taxon>Micromonospora</taxon>
    </lineage>
</organism>
<gene>
    <name type="primary">myrB</name>
</gene>
<keyword id="KW-0046">Antibiotic resistance</keyword>
<keyword id="KW-0489">Methyltransferase</keyword>
<keyword id="KW-0694">RNA-binding</keyword>
<keyword id="KW-0949">S-adenosyl-L-methionine</keyword>
<keyword id="KW-0808">Transferase</keyword>
<comment type="function">
    <text>Confers resistance to macrolide, lincosamide and streptogramin B antibiotics.</text>
</comment>
<comment type="similarity">
    <text evidence="1">Belongs to the class I-like SAM-binding methyltransferase superfamily. rRNA adenine N(6)-methyltransferase family.</text>
</comment>
<accession>P43433</accession>
<name>MYRB_MICGR</name>
<protein>
    <recommendedName>
        <fullName>Mycinamicin-resistance protein MyrB</fullName>
        <ecNumber>2.1.1.-</ecNumber>
    </recommendedName>
</protein>
<evidence type="ECO:0000255" key="1">
    <source>
        <dbReference type="PROSITE-ProRule" id="PRU01026"/>
    </source>
</evidence>
<evidence type="ECO:0000256" key="2">
    <source>
        <dbReference type="SAM" id="MobiDB-lite"/>
    </source>
</evidence>
<reference key="1">
    <citation type="journal article" date="1994" name="Gene">
        <title>Cloning and sequences of two macrolide-resistance-encoding genes from mycinamicin-producing Micromonospora griseorubida.</title>
        <authorList>
            <person name="Inouye M."/>
            <person name="Morohoshi T."/>
            <person name="Horinouchi S."/>
            <person name="Beppu T."/>
        </authorList>
    </citation>
    <scope>NUCLEOTIDE SEQUENCE [GENOMIC DNA]</scope>
</reference>
<dbReference type="EC" id="2.1.1.-"/>
<dbReference type="EMBL" id="D14532">
    <property type="protein sequence ID" value="BAA03402.1"/>
    <property type="molecule type" value="Genomic_DNA"/>
</dbReference>
<dbReference type="RefSeq" id="WP_063844871.1">
    <property type="nucleotide sequence ID" value="NG_047846.1"/>
</dbReference>
<dbReference type="SMR" id="P43433"/>
<dbReference type="CARD" id="ARO:3001306">
    <property type="molecule name" value="ErmW"/>
    <property type="mechanism identifier" value="ARO:0001001"/>
    <property type="mechanism name" value="antibiotic target alteration"/>
</dbReference>
<dbReference type="KEGG" id="ag:BAA03402"/>
<dbReference type="GO" id="GO:0005829">
    <property type="term" value="C:cytosol"/>
    <property type="evidence" value="ECO:0007669"/>
    <property type="project" value="TreeGrafter"/>
</dbReference>
<dbReference type="GO" id="GO:0003723">
    <property type="term" value="F:RNA binding"/>
    <property type="evidence" value="ECO:0007669"/>
    <property type="project" value="UniProtKB-KW"/>
</dbReference>
<dbReference type="GO" id="GO:0000179">
    <property type="term" value="F:rRNA (adenine-N6,N6-)-dimethyltransferase activity"/>
    <property type="evidence" value="ECO:0007669"/>
    <property type="project" value="InterPro"/>
</dbReference>
<dbReference type="GO" id="GO:0046677">
    <property type="term" value="P:response to antibiotic"/>
    <property type="evidence" value="ECO:0007669"/>
    <property type="project" value="UniProtKB-KW"/>
</dbReference>
<dbReference type="CDD" id="cd02440">
    <property type="entry name" value="AdoMet_MTases"/>
    <property type="match status" value="1"/>
</dbReference>
<dbReference type="Gene3D" id="3.40.50.150">
    <property type="entry name" value="Vaccinia Virus protein VP39"/>
    <property type="match status" value="1"/>
</dbReference>
<dbReference type="InterPro" id="IPR001737">
    <property type="entry name" value="KsgA/Erm"/>
</dbReference>
<dbReference type="InterPro" id="IPR020596">
    <property type="entry name" value="rRNA_Ade_Mease_Trfase_CS"/>
</dbReference>
<dbReference type="InterPro" id="IPR020598">
    <property type="entry name" value="rRNA_Ade_methylase_Trfase_N"/>
</dbReference>
<dbReference type="InterPro" id="IPR029063">
    <property type="entry name" value="SAM-dependent_MTases_sf"/>
</dbReference>
<dbReference type="NCBIfam" id="NF000499">
    <property type="entry name" value="Erm23S_rRNA_broad"/>
    <property type="match status" value="1"/>
</dbReference>
<dbReference type="PANTHER" id="PTHR11727">
    <property type="entry name" value="DIMETHYLADENOSINE TRANSFERASE"/>
    <property type="match status" value="1"/>
</dbReference>
<dbReference type="PANTHER" id="PTHR11727:SF7">
    <property type="entry name" value="DIMETHYLADENOSINE TRANSFERASE-RELATED"/>
    <property type="match status" value="1"/>
</dbReference>
<dbReference type="Pfam" id="PF00398">
    <property type="entry name" value="RrnaAD"/>
    <property type="match status" value="1"/>
</dbReference>
<dbReference type="SMART" id="SM00650">
    <property type="entry name" value="rADc"/>
    <property type="match status" value="1"/>
</dbReference>
<dbReference type="SUPFAM" id="SSF53335">
    <property type="entry name" value="S-adenosyl-L-methionine-dependent methyltransferases"/>
    <property type="match status" value="1"/>
</dbReference>
<dbReference type="PROSITE" id="PS01131">
    <property type="entry name" value="RRNA_A_DIMETH"/>
    <property type="match status" value="1"/>
</dbReference>
<dbReference type="PROSITE" id="PS51689">
    <property type="entry name" value="SAM_RNA_A_N6_MT"/>
    <property type="match status" value="1"/>
</dbReference>
<sequence>MSSIRRRHAAASLDTPAVGGRHELGQNFLVDRGVCTRIAEVVSSTTAHPVLELGAGDGAITRALVAANLPVTALELDPRRVRRLQRTFADGVTVVHGDMLRYDFGPYPHHVVSTVPFSITTPLLRRLIGQRFWHTAVLLVQWEVARKRAGVGGTTMLTAASWPWYEFTLVERVPKTSFDPVPSVDGGILVIERRSAPLLDDRCVGDYQNLVREVYTGPGRGLAAILRTRLPGREVDAWLRRERVDPAALPRDLKAGHWASLYRLYREVGTRPAPAGRSVRARPGSVGPDRSLPPRGLRSGPPRARRRGGGA</sequence>
<feature type="chain" id="PRO_0000101693" description="Mycinamicin-resistance protein MyrB">
    <location>
        <begin position="1"/>
        <end position="311"/>
    </location>
</feature>
<feature type="region of interest" description="Disordered" evidence="2">
    <location>
        <begin position="272"/>
        <end position="311"/>
    </location>
</feature>
<feature type="compositionally biased region" description="Low complexity" evidence="2">
    <location>
        <begin position="293"/>
        <end position="302"/>
    </location>
</feature>
<feature type="binding site" evidence="1">
    <location>
        <position position="27"/>
    </location>
    <ligand>
        <name>S-adenosyl-L-methionine</name>
        <dbReference type="ChEBI" id="CHEBI:59789"/>
    </ligand>
</feature>
<feature type="binding site" evidence="1">
    <location>
        <position position="29"/>
    </location>
    <ligand>
        <name>S-adenosyl-L-methionine</name>
        <dbReference type="ChEBI" id="CHEBI:59789"/>
    </ligand>
</feature>
<feature type="binding site" evidence="1">
    <location>
        <position position="54"/>
    </location>
    <ligand>
        <name>S-adenosyl-L-methionine</name>
        <dbReference type="ChEBI" id="CHEBI:59789"/>
    </ligand>
</feature>
<feature type="binding site" evidence="1">
    <location>
        <position position="75"/>
    </location>
    <ligand>
        <name>S-adenosyl-L-methionine</name>
        <dbReference type="ChEBI" id="CHEBI:59789"/>
    </ligand>
</feature>
<feature type="binding site" evidence="1">
    <location>
        <position position="98"/>
    </location>
    <ligand>
        <name>S-adenosyl-L-methionine</name>
        <dbReference type="ChEBI" id="CHEBI:59789"/>
    </ligand>
</feature>